<sequence>MAAQKVGLLFGGRSGEHEVSIRSAAAIASALADPSNRDRYQVLPFYIDKEGGWHSGETAAQVLANQKPLFVEEPSDRWQFPADCRDVEVWFPILHGPNGEDGTIQGLLTLMQRPFVGSGVLGSALGMDKIAMKQAFAQASLPQVAYVAVNRSQVFSDPCRYTSLLEQIETELGYPCFVKPANLGSSVGIAKVRDRAELEAALDQAAALDRRLIIEAAIDNPREVECAVLGNDYPQASILGEITYDSDFYDYETKYTDGKAQLLIPAQLSAELQQKLQELAIAAFQAVDASGLSRLDFFLDSQGQIFINEINTLPGFTALSMYPQLWAASGVAFPDLVHRLIQLALER</sequence>
<accession>Q31KL4</accession>
<feature type="chain" id="PRO_1000030512" description="D-alanine--D-alanine ligase">
    <location>
        <begin position="1"/>
        <end position="347"/>
    </location>
</feature>
<feature type="domain" description="ATP-grasp" evidence="2">
    <location>
        <begin position="133"/>
        <end position="342"/>
    </location>
</feature>
<feature type="binding site" evidence="2">
    <location>
        <begin position="169"/>
        <end position="224"/>
    </location>
    <ligand>
        <name>ATP</name>
        <dbReference type="ChEBI" id="CHEBI:30616"/>
    </ligand>
</feature>
<feature type="binding site" evidence="2">
    <location>
        <position position="296"/>
    </location>
    <ligand>
        <name>Mg(2+)</name>
        <dbReference type="ChEBI" id="CHEBI:18420"/>
        <label>1</label>
    </ligand>
</feature>
<feature type="binding site" evidence="2">
    <location>
        <position position="309"/>
    </location>
    <ligand>
        <name>Mg(2+)</name>
        <dbReference type="ChEBI" id="CHEBI:18420"/>
        <label>1</label>
    </ligand>
</feature>
<feature type="binding site" evidence="2">
    <location>
        <position position="309"/>
    </location>
    <ligand>
        <name>Mg(2+)</name>
        <dbReference type="ChEBI" id="CHEBI:18420"/>
        <label>2</label>
    </ligand>
</feature>
<feature type="binding site" evidence="2">
    <location>
        <position position="311"/>
    </location>
    <ligand>
        <name>Mg(2+)</name>
        <dbReference type="ChEBI" id="CHEBI:18420"/>
        <label>2</label>
    </ligand>
</feature>
<keyword id="KW-0067">ATP-binding</keyword>
<keyword id="KW-0133">Cell shape</keyword>
<keyword id="KW-0961">Cell wall biogenesis/degradation</keyword>
<keyword id="KW-0963">Cytoplasm</keyword>
<keyword id="KW-0436">Ligase</keyword>
<keyword id="KW-0460">Magnesium</keyword>
<keyword id="KW-0464">Manganese</keyword>
<keyword id="KW-0479">Metal-binding</keyword>
<keyword id="KW-0547">Nucleotide-binding</keyword>
<keyword id="KW-0573">Peptidoglycan synthesis</keyword>
<keyword id="KW-1185">Reference proteome</keyword>
<reference key="1">
    <citation type="submission" date="2005-08" db="EMBL/GenBank/DDBJ databases">
        <title>Complete sequence of chromosome 1 of Synechococcus elongatus PCC 7942.</title>
        <authorList>
            <consortium name="US DOE Joint Genome Institute"/>
            <person name="Copeland A."/>
            <person name="Lucas S."/>
            <person name="Lapidus A."/>
            <person name="Barry K."/>
            <person name="Detter J.C."/>
            <person name="Glavina T."/>
            <person name="Hammon N."/>
            <person name="Israni S."/>
            <person name="Pitluck S."/>
            <person name="Schmutz J."/>
            <person name="Larimer F."/>
            <person name="Land M."/>
            <person name="Kyrpides N."/>
            <person name="Lykidis A."/>
            <person name="Golden S."/>
            <person name="Richardson P."/>
        </authorList>
    </citation>
    <scope>NUCLEOTIDE SEQUENCE [LARGE SCALE GENOMIC DNA]</scope>
    <source>
        <strain>ATCC 33912 / PCC 7942 / FACHB-805</strain>
    </source>
</reference>
<comment type="function">
    <text evidence="2">Cell wall formation.</text>
</comment>
<comment type="catalytic activity">
    <reaction evidence="2">
        <text>2 D-alanine + ATP = D-alanyl-D-alanine + ADP + phosphate + H(+)</text>
        <dbReference type="Rhea" id="RHEA:11224"/>
        <dbReference type="ChEBI" id="CHEBI:15378"/>
        <dbReference type="ChEBI" id="CHEBI:30616"/>
        <dbReference type="ChEBI" id="CHEBI:43474"/>
        <dbReference type="ChEBI" id="CHEBI:57416"/>
        <dbReference type="ChEBI" id="CHEBI:57822"/>
        <dbReference type="ChEBI" id="CHEBI:456216"/>
        <dbReference type="EC" id="6.3.2.4"/>
    </reaction>
</comment>
<comment type="cofactor">
    <cofactor evidence="1">
        <name>Mg(2+)</name>
        <dbReference type="ChEBI" id="CHEBI:18420"/>
    </cofactor>
    <cofactor evidence="1">
        <name>Mn(2+)</name>
        <dbReference type="ChEBI" id="CHEBI:29035"/>
    </cofactor>
    <text evidence="1">Binds 2 magnesium or manganese ions per subunit.</text>
</comment>
<comment type="pathway">
    <text evidence="2">Cell wall biogenesis; peptidoglycan biosynthesis.</text>
</comment>
<comment type="subcellular location">
    <subcellularLocation>
        <location evidence="2">Cytoplasm</location>
    </subcellularLocation>
</comment>
<comment type="similarity">
    <text evidence="2">Belongs to the D-alanine--D-alanine ligase family.</text>
</comment>
<dbReference type="EC" id="6.3.2.4" evidence="2"/>
<dbReference type="EMBL" id="CP000100">
    <property type="protein sequence ID" value="ABB58405.1"/>
    <property type="molecule type" value="Genomic_DNA"/>
</dbReference>
<dbReference type="RefSeq" id="WP_011244040.1">
    <property type="nucleotide sequence ID" value="NZ_JACJTX010000001.1"/>
</dbReference>
<dbReference type="SMR" id="Q31KL4"/>
<dbReference type="STRING" id="1140.Synpcc7942_2375"/>
<dbReference type="PaxDb" id="1140-Synpcc7942_2375"/>
<dbReference type="KEGG" id="syf:Synpcc7942_2375"/>
<dbReference type="eggNOG" id="COG1181">
    <property type="taxonomic scope" value="Bacteria"/>
</dbReference>
<dbReference type="HOGENOM" id="CLU_039268_0_0_3"/>
<dbReference type="OrthoDB" id="9813261at2"/>
<dbReference type="BioCyc" id="SYNEL:SYNPCC7942_2375-MONOMER"/>
<dbReference type="UniPathway" id="UPA00219"/>
<dbReference type="Proteomes" id="UP000889800">
    <property type="component" value="Chromosome"/>
</dbReference>
<dbReference type="GO" id="GO:0005829">
    <property type="term" value="C:cytosol"/>
    <property type="evidence" value="ECO:0007669"/>
    <property type="project" value="TreeGrafter"/>
</dbReference>
<dbReference type="GO" id="GO:0005524">
    <property type="term" value="F:ATP binding"/>
    <property type="evidence" value="ECO:0007669"/>
    <property type="project" value="UniProtKB-KW"/>
</dbReference>
<dbReference type="GO" id="GO:0008716">
    <property type="term" value="F:D-alanine-D-alanine ligase activity"/>
    <property type="evidence" value="ECO:0007669"/>
    <property type="project" value="UniProtKB-UniRule"/>
</dbReference>
<dbReference type="GO" id="GO:0046872">
    <property type="term" value="F:metal ion binding"/>
    <property type="evidence" value="ECO:0007669"/>
    <property type="project" value="UniProtKB-KW"/>
</dbReference>
<dbReference type="GO" id="GO:0071555">
    <property type="term" value="P:cell wall organization"/>
    <property type="evidence" value="ECO:0007669"/>
    <property type="project" value="UniProtKB-KW"/>
</dbReference>
<dbReference type="GO" id="GO:0009252">
    <property type="term" value="P:peptidoglycan biosynthetic process"/>
    <property type="evidence" value="ECO:0007669"/>
    <property type="project" value="UniProtKB-UniRule"/>
</dbReference>
<dbReference type="GO" id="GO:0008360">
    <property type="term" value="P:regulation of cell shape"/>
    <property type="evidence" value="ECO:0007669"/>
    <property type="project" value="UniProtKB-KW"/>
</dbReference>
<dbReference type="FunFam" id="3.30.1490.20:FF:000007">
    <property type="entry name" value="D-alanine--D-alanine ligase"/>
    <property type="match status" value="1"/>
</dbReference>
<dbReference type="FunFam" id="3.30.470.20:FF:000008">
    <property type="entry name" value="D-alanine--D-alanine ligase"/>
    <property type="match status" value="1"/>
</dbReference>
<dbReference type="Gene3D" id="3.40.50.20">
    <property type="match status" value="1"/>
</dbReference>
<dbReference type="Gene3D" id="3.30.1490.20">
    <property type="entry name" value="ATP-grasp fold, A domain"/>
    <property type="match status" value="1"/>
</dbReference>
<dbReference type="Gene3D" id="3.30.470.20">
    <property type="entry name" value="ATP-grasp fold, B domain"/>
    <property type="match status" value="1"/>
</dbReference>
<dbReference type="HAMAP" id="MF_00047">
    <property type="entry name" value="Dala_Dala_lig"/>
    <property type="match status" value="1"/>
</dbReference>
<dbReference type="InterPro" id="IPR011761">
    <property type="entry name" value="ATP-grasp"/>
</dbReference>
<dbReference type="InterPro" id="IPR013815">
    <property type="entry name" value="ATP_grasp_subdomain_1"/>
</dbReference>
<dbReference type="InterPro" id="IPR000291">
    <property type="entry name" value="D-Ala_lig_Van_CS"/>
</dbReference>
<dbReference type="InterPro" id="IPR005905">
    <property type="entry name" value="D_ala_D_ala"/>
</dbReference>
<dbReference type="InterPro" id="IPR011095">
    <property type="entry name" value="Dala_Dala_lig_C"/>
</dbReference>
<dbReference type="InterPro" id="IPR011127">
    <property type="entry name" value="Dala_Dala_lig_N"/>
</dbReference>
<dbReference type="InterPro" id="IPR016185">
    <property type="entry name" value="PreATP-grasp_dom_sf"/>
</dbReference>
<dbReference type="NCBIfam" id="TIGR01205">
    <property type="entry name" value="D_ala_D_alaTIGR"/>
    <property type="match status" value="1"/>
</dbReference>
<dbReference type="NCBIfam" id="NF002378">
    <property type="entry name" value="PRK01372.1"/>
    <property type="match status" value="1"/>
</dbReference>
<dbReference type="NCBIfam" id="NF002528">
    <property type="entry name" value="PRK01966.1-4"/>
    <property type="match status" value="1"/>
</dbReference>
<dbReference type="PANTHER" id="PTHR23132">
    <property type="entry name" value="D-ALANINE--D-ALANINE LIGASE"/>
    <property type="match status" value="1"/>
</dbReference>
<dbReference type="PANTHER" id="PTHR23132:SF25">
    <property type="entry name" value="D-ALANINE--D-ALANINE LIGASE A"/>
    <property type="match status" value="1"/>
</dbReference>
<dbReference type="Pfam" id="PF07478">
    <property type="entry name" value="Dala_Dala_lig_C"/>
    <property type="match status" value="1"/>
</dbReference>
<dbReference type="Pfam" id="PF01820">
    <property type="entry name" value="Dala_Dala_lig_N"/>
    <property type="match status" value="1"/>
</dbReference>
<dbReference type="PIRSF" id="PIRSF039102">
    <property type="entry name" value="Ddl/VanB"/>
    <property type="match status" value="1"/>
</dbReference>
<dbReference type="SUPFAM" id="SSF56059">
    <property type="entry name" value="Glutathione synthetase ATP-binding domain-like"/>
    <property type="match status" value="1"/>
</dbReference>
<dbReference type="SUPFAM" id="SSF52440">
    <property type="entry name" value="PreATP-grasp domain"/>
    <property type="match status" value="1"/>
</dbReference>
<dbReference type="PROSITE" id="PS50975">
    <property type="entry name" value="ATP_GRASP"/>
    <property type="match status" value="1"/>
</dbReference>
<dbReference type="PROSITE" id="PS00843">
    <property type="entry name" value="DALA_DALA_LIGASE_1"/>
    <property type="match status" value="1"/>
</dbReference>
<dbReference type="PROSITE" id="PS00844">
    <property type="entry name" value="DALA_DALA_LIGASE_2"/>
    <property type="match status" value="1"/>
</dbReference>
<proteinExistence type="inferred from homology"/>
<protein>
    <recommendedName>
        <fullName evidence="2">D-alanine--D-alanine ligase</fullName>
        <ecNumber evidence="2">6.3.2.4</ecNumber>
    </recommendedName>
    <alternativeName>
        <fullName evidence="2">D-Ala-D-Ala ligase</fullName>
    </alternativeName>
    <alternativeName>
        <fullName evidence="2">D-alanylalanine synthetase</fullName>
    </alternativeName>
</protein>
<name>DDL_SYNE7</name>
<organism>
    <name type="scientific">Synechococcus elongatus (strain ATCC 33912 / PCC 7942 / FACHB-805)</name>
    <name type="common">Anacystis nidulans R2</name>
    <dbReference type="NCBI Taxonomy" id="1140"/>
    <lineage>
        <taxon>Bacteria</taxon>
        <taxon>Bacillati</taxon>
        <taxon>Cyanobacteriota</taxon>
        <taxon>Cyanophyceae</taxon>
        <taxon>Synechococcales</taxon>
        <taxon>Synechococcaceae</taxon>
        <taxon>Synechococcus</taxon>
    </lineage>
</organism>
<evidence type="ECO:0000250" key="1"/>
<evidence type="ECO:0000255" key="2">
    <source>
        <dbReference type="HAMAP-Rule" id="MF_00047"/>
    </source>
</evidence>
<gene>
    <name evidence="2" type="primary">ddl</name>
    <name type="ordered locus">Synpcc7942_2375</name>
</gene>